<proteinExistence type="inferred from homology"/>
<feature type="chain" id="PRO_0000125045" description="Large ribosomal subunit protein uL5c">
    <location>
        <begin position="1"/>
        <end position="184"/>
    </location>
</feature>
<dbReference type="EMBL" id="AF137379">
    <property type="protein sequence ID" value="AAD54793.1"/>
    <property type="molecule type" value="Genomic_DNA"/>
</dbReference>
<dbReference type="RefSeq" id="NP_050822.1">
    <property type="nucleotide sequence ID" value="NC_000927.1"/>
</dbReference>
<dbReference type="SMR" id="Q9TL23"/>
<dbReference type="GeneID" id="801958"/>
<dbReference type="GO" id="GO:0009507">
    <property type="term" value="C:chloroplast"/>
    <property type="evidence" value="ECO:0007669"/>
    <property type="project" value="UniProtKB-SubCell"/>
</dbReference>
<dbReference type="GO" id="GO:1990904">
    <property type="term" value="C:ribonucleoprotein complex"/>
    <property type="evidence" value="ECO:0007669"/>
    <property type="project" value="UniProtKB-KW"/>
</dbReference>
<dbReference type="GO" id="GO:0005840">
    <property type="term" value="C:ribosome"/>
    <property type="evidence" value="ECO:0007669"/>
    <property type="project" value="UniProtKB-KW"/>
</dbReference>
<dbReference type="GO" id="GO:0019843">
    <property type="term" value="F:rRNA binding"/>
    <property type="evidence" value="ECO:0007669"/>
    <property type="project" value="UniProtKB-UniRule"/>
</dbReference>
<dbReference type="GO" id="GO:0003735">
    <property type="term" value="F:structural constituent of ribosome"/>
    <property type="evidence" value="ECO:0007669"/>
    <property type="project" value="InterPro"/>
</dbReference>
<dbReference type="GO" id="GO:0006412">
    <property type="term" value="P:translation"/>
    <property type="evidence" value="ECO:0007669"/>
    <property type="project" value="UniProtKB-UniRule"/>
</dbReference>
<dbReference type="FunFam" id="3.30.1440.10:FF:000001">
    <property type="entry name" value="50S ribosomal protein L5"/>
    <property type="match status" value="1"/>
</dbReference>
<dbReference type="Gene3D" id="3.30.1440.10">
    <property type="match status" value="1"/>
</dbReference>
<dbReference type="HAMAP" id="MF_01333_B">
    <property type="entry name" value="Ribosomal_uL5_B"/>
    <property type="match status" value="1"/>
</dbReference>
<dbReference type="InterPro" id="IPR002132">
    <property type="entry name" value="Ribosomal_uL5"/>
</dbReference>
<dbReference type="InterPro" id="IPR020930">
    <property type="entry name" value="Ribosomal_uL5_bac-type"/>
</dbReference>
<dbReference type="InterPro" id="IPR031309">
    <property type="entry name" value="Ribosomal_uL5_C"/>
</dbReference>
<dbReference type="InterPro" id="IPR020929">
    <property type="entry name" value="Ribosomal_uL5_CS"/>
</dbReference>
<dbReference type="InterPro" id="IPR022803">
    <property type="entry name" value="Ribosomal_uL5_dom_sf"/>
</dbReference>
<dbReference type="InterPro" id="IPR031310">
    <property type="entry name" value="Ribosomal_uL5_N"/>
</dbReference>
<dbReference type="NCBIfam" id="NF000585">
    <property type="entry name" value="PRK00010.1"/>
    <property type="match status" value="1"/>
</dbReference>
<dbReference type="PANTHER" id="PTHR11994">
    <property type="entry name" value="60S RIBOSOMAL PROTEIN L11-RELATED"/>
    <property type="match status" value="1"/>
</dbReference>
<dbReference type="Pfam" id="PF00281">
    <property type="entry name" value="Ribosomal_L5"/>
    <property type="match status" value="1"/>
</dbReference>
<dbReference type="Pfam" id="PF00673">
    <property type="entry name" value="Ribosomal_L5_C"/>
    <property type="match status" value="1"/>
</dbReference>
<dbReference type="PIRSF" id="PIRSF002161">
    <property type="entry name" value="Ribosomal_L5"/>
    <property type="match status" value="1"/>
</dbReference>
<dbReference type="SUPFAM" id="SSF55282">
    <property type="entry name" value="RL5-like"/>
    <property type="match status" value="1"/>
</dbReference>
<dbReference type="PROSITE" id="PS00358">
    <property type="entry name" value="RIBOSOMAL_L5"/>
    <property type="match status" value="1"/>
</dbReference>
<comment type="function">
    <text evidence="1">Binds 5S rRNA, forms part of the central protuberance of the 50S subunit.</text>
</comment>
<comment type="subunit">
    <text evidence="1">Part of the 50S ribosomal subunit; contacts the 5S rRNA.</text>
</comment>
<comment type="subcellular location">
    <subcellularLocation>
        <location>Plastid</location>
        <location>Chloroplast</location>
    </subcellularLocation>
</comment>
<comment type="similarity">
    <text evidence="2">Belongs to the universal ribosomal protein uL5 family.</text>
</comment>
<gene>
    <name type="primary">rpl5</name>
</gene>
<organism>
    <name type="scientific">Nephroselmis olivacea</name>
    <name type="common">Green alga</name>
    <dbReference type="NCBI Taxonomy" id="31312"/>
    <lineage>
        <taxon>Eukaryota</taxon>
        <taxon>Viridiplantae</taxon>
        <taxon>Chlorophyta</taxon>
        <taxon>Nephroselmidophyceae</taxon>
        <taxon>Nephroselmidales</taxon>
        <taxon>Nephroselmidaceae</taxon>
        <taxon>Nephroselmis</taxon>
    </lineage>
</organism>
<evidence type="ECO:0000250" key="1"/>
<evidence type="ECO:0000305" key="2"/>
<name>RK5_NEPOL</name>
<keyword id="KW-0150">Chloroplast</keyword>
<keyword id="KW-0934">Plastid</keyword>
<keyword id="KW-0687">Ribonucleoprotein</keyword>
<keyword id="KW-0689">Ribosomal protein</keyword>
<keyword id="KW-0694">RNA-binding</keyword>
<keyword id="KW-0699">rRNA-binding</keyword>
<reference key="1">
    <citation type="journal article" date="1999" name="Proc. Natl. Acad. Sci. U.S.A.">
        <title>The complete chloroplast DNA sequence of the green alga Nephroselmis olivacea: insights into the architecture of ancestral chloroplast genomes.</title>
        <authorList>
            <person name="Turmel M."/>
            <person name="Otis C."/>
            <person name="Lemieux C."/>
        </authorList>
    </citation>
    <scope>NUCLEOTIDE SEQUENCE [LARGE SCALE GENOMIC DNA]</scope>
    <source>
        <strain>NIES-484 / S-N-5-8</strain>
    </source>
</reference>
<geneLocation type="chloroplast"/>
<accession>Q9TL23</accession>
<sequence>MAQRLKTFYLNSVVPKLRQQFHHRNIHEVPSIKKIVINRGLGDASQNAKLLDGSLQELTTIAGQRGVITRSKQAIAAFKIRQDMPVGISVTLRGERMYAFLDRLINLALPRIRDFQGMSTKSFDGQGNYSLGLNEQLMFPEINYDAIDQMRGMDISIITSATEDREGFALLQALGMPFRTATID</sequence>
<protein>
    <recommendedName>
        <fullName evidence="2">Large ribosomal subunit protein uL5c</fullName>
    </recommendedName>
    <alternativeName>
        <fullName>50S ribosomal protein L5, chloroplastic</fullName>
    </alternativeName>
</protein>